<proteinExistence type="evidence at protein level"/>
<accession>Q9BX73</accession>
<accession>B2RBK4</accession>
<accession>D3DSX8</accession>
<accession>Q8N0X9</accession>
<feature type="signal peptide" evidence="1">
    <location>
        <begin position="1"/>
        <end position="35"/>
    </location>
</feature>
<feature type="chain" id="PRO_0000298982" description="TM2 domain-containing protein 2">
    <location>
        <begin position="36"/>
        <end position="214"/>
    </location>
</feature>
<feature type="topological domain" description="Extracellular" evidence="8">
    <location>
        <begin position="36"/>
        <end position="144"/>
    </location>
</feature>
<feature type="transmembrane region" description="Helical" evidence="1">
    <location>
        <begin position="145"/>
        <end position="165"/>
    </location>
</feature>
<feature type="topological domain" description="Cytoplasmic" evidence="8">
    <location>
        <begin position="166"/>
        <end position="182"/>
    </location>
</feature>
<feature type="transmembrane region" description="Helical" evidence="1">
    <location>
        <begin position="183"/>
        <end position="203"/>
    </location>
</feature>
<feature type="topological domain" description="Extracellular" evidence="8">
    <location>
        <begin position="204"/>
        <end position="214"/>
    </location>
</feature>
<feature type="domain" description="TM2" evidence="1">
    <location>
        <begin position="147"/>
        <end position="195"/>
    </location>
</feature>
<feature type="region of interest" description="Disordered" evidence="3">
    <location>
        <begin position="40"/>
        <end position="59"/>
    </location>
</feature>
<feature type="glycosylation site" description="N-linked (GlcNAc...) asparagine" evidence="2">
    <location>
        <position position="37"/>
    </location>
</feature>
<feature type="glycosylation site" description="N-linked (GlcNAc...) asparagine" evidence="2">
    <location>
        <position position="92"/>
    </location>
</feature>
<feature type="splice variant" id="VSP_027495" description="In isoform 2." evidence="5 6 7">
    <original>MVLGGCPVSYLLLCGQAALLLGNLLLLHCVSRSHSQNATAEPELTSAGAAQPEGPGGAASWEYGDPHSPVILCSYL</original>
    <variation>MKKCLLPVLITCMQTAICKDRMMMIMILLVNYR</variation>
    <location>
        <begin position="1"/>
        <end position="76"/>
    </location>
</feature>
<name>TM2D2_HUMAN</name>
<gene>
    <name type="primary">TM2D2</name>
    <name type="synonym">BLP1</name>
</gene>
<evidence type="ECO:0000255" key="1"/>
<evidence type="ECO:0000255" key="2">
    <source>
        <dbReference type="PROSITE-ProRule" id="PRU00498"/>
    </source>
</evidence>
<evidence type="ECO:0000256" key="3">
    <source>
        <dbReference type="SAM" id="MobiDB-lite"/>
    </source>
</evidence>
<evidence type="ECO:0000269" key="4">
    <source>
    </source>
</evidence>
<evidence type="ECO:0000303" key="5">
    <source>
    </source>
</evidence>
<evidence type="ECO:0000303" key="6">
    <source>
    </source>
</evidence>
<evidence type="ECO:0000303" key="7">
    <source>
    </source>
</evidence>
<evidence type="ECO:0000305" key="8"/>
<sequence>MVLGGCPVSYLLLCGQAALLLGNLLLLHCVSRSHSQNATAEPELTSAGAAQPEGPGGAASWEYGDPHSPVILCSYLPDEFIECEDPVDHVGNATASQELGYGCLKFGGQAYSDVEHTSVQCHALDGIECASPRTFLRENKPCIKYTGHYFITTLLYSFFLGCFGVDRFCLGHTGTAVGKLLTLGGLGIWWFVDLILLITGGLMPSDGSNWCTVY</sequence>
<reference key="1">
    <citation type="journal article" date="2001" name="J. Biol. Chem.">
        <title>Beta-amyloid peptide-induced apoptosis regulated by a novel protein containing a G protein activation module.</title>
        <authorList>
            <person name="Kajkowski E.M."/>
            <person name="Lo C.F."/>
            <person name="Ning X."/>
            <person name="Walker S."/>
            <person name="Sofia H.J."/>
            <person name="Wang W."/>
            <person name="Edris W."/>
            <person name="Chanda P."/>
            <person name="Wagner E."/>
            <person name="Vile S."/>
            <person name="Ryan K."/>
            <person name="McHendry-Rinde B."/>
            <person name="Smith S.C."/>
            <person name="Wood A."/>
            <person name="Rhodes K.J."/>
            <person name="Kennedy J.D."/>
            <person name="Bard J."/>
            <person name="Jacobsen J.S."/>
            <person name="Ozenberger B.A."/>
        </authorList>
    </citation>
    <scope>NUCLEOTIDE SEQUENCE [MRNA] (ISOFORM 1)</scope>
    <scope>TISSUE SPECIFICITY</scope>
</reference>
<reference key="2">
    <citation type="journal article" date="2004" name="Nat. Genet.">
        <title>Complete sequencing and characterization of 21,243 full-length human cDNAs.</title>
        <authorList>
            <person name="Ota T."/>
            <person name="Suzuki Y."/>
            <person name="Nishikawa T."/>
            <person name="Otsuki T."/>
            <person name="Sugiyama T."/>
            <person name="Irie R."/>
            <person name="Wakamatsu A."/>
            <person name="Hayashi K."/>
            <person name="Sato H."/>
            <person name="Nagai K."/>
            <person name="Kimura K."/>
            <person name="Makita H."/>
            <person name="Sekine M."/>
            <person name="Obayashi M."/>
            <person name="Nishi T."/>
            <person name="Shibahara T."/>
            <person name="Tanaka T."/>
            <person name="Ishii S."/>
            <person name="Yamamoto J."/>
            <person name="Saito K."/>
            <person name="Kawai Y."/>
            <person name="Isono Y."/>
            <person name="Nakamura Y."/>
            <person name="Nagahari K."/>
            <person name="Murakami K."/>
            <person name="Yasuda T."/>
            <person name="Iwayanagi T."/>
            <person name="Wagatsuma M."/>
            <person name="Shiratori A."/>
            <person name="Sudo H."/>
            <person name="Hosoiri T."/>
            <person name="Kaku Y."/>
            <person name="Kodaira H."/>
            <person name="Kondo H."/>
            <person name="Sugawara M."/>
            <person name="Takahashi M."/>
            <person name="Kanda K."/>
            <person name="Yokoi T."/>
            <person name="Furuya T."/>
            <person name="Kikkawa E."/>
            <person name="Omura Y."/>
            <person name="Abe K."/>
            <person name="Kamihara K."/>
            <person name="Katsuta N."/>
            <person name="Sato K."/>
            <person name="Tanikawa M."/>
            <person name="Yamazaki M."/>
            <person name="Ninomiya K."/>
            <person name="Ishibashi T."/>
            <person name="Yamashita H."/>
            <person name="Murakawa K."/>
            <person name="Fujimori K."/>
            <person name="Tanai H."/>
            <person name="Kimata M."/>
            <person name="Watanabe M."/>
            <person name="Hiraoka S."/>
            <person name="Chiba Y."/>
            <person name="Ishida S."/>
            <person name="Ono Y."/>
            <person name="Takiguchi S."/>
            <person name="Watanabe S."/>
            <person name="Yosida M."/>
            <person name="Hotuta T."/>
            <person name="Kusano J."/>
            <person name="Kanehori K."/>
            <person name="Takahashi-Fujii A."/>
            <person name="Hara H."/>
            <person name="Tanase T.-O."/>
            <person name="Nomura Y."/>
            <person name="Togiya S."/>
            <person name="Komai F."/>
            <person name="Hara R."/>
            <person name="Takeuchi K."/>
            <person name="Arita M."/>
            <person name="Imose N."/>
            <person name="Musashino K."/>
            <person name="Yuuki H."/>
            <person name="Oshima A."/>
            <person name="Sasaki N."/>
            <person name="Aotsuka S."/>
            <person name="Yoshikawa Y."/>
            <person name="Matsunawa H."/>
            <person name="Ichihara T."/>
            <person name="Shiohata N."/>
            <person name="Sano S."/>
            <person name="Moriya S."/>
            <person name="Momiyama H."/>
            <person name="Satoh N."/>
            <person name="Takami S."/>
            <person name="Terashima Y."/>
            <person name="Suzuki O."/>
            <person name="Nakagawa S."/>
            <person name="Senoh A."/>
            <person name="Mizoguchi H."/>
            <person name="Goto Y."/>
            <person name="Shimizu F."/>
            <person name="Wakebe H."/>
            <person name="Hishigaki H."/>
            <person name="Watanabe T."/>
            <person name="Sugiyama A."/>
            <person name="Takemoto M."/>
            <person name="Kawakami B."/>
            <person name="Yamazaki M."/>
            <person name="Watanabe K."/>
            <person name="Kumagai A."/>
            <person name="Itakura S."/>
            <person name="Fukuzumi Y."/>
            <person name="Fujimori Y."/>
            <person name="Komiyama M."/>
            <person name="Tashiro H."/>
            <person name="Tanigami A."/>
            <person name="Fujiwara T."/>
            <person name="Ono T."/>
            <person name="Yamada K."/>
            <person name="Fujii Y."/>
            <person name="Ozaki K."/>
            <person name="Hirao M."/>
            <person name="Ohmori Y."/>
            <person name="Kawabata A."/>
            <person name="Hikiji T."/>
            <person name="Kobatake N."/>
            <person name="Inagaki H."/>
            <person name="Ikema Y."/>
            <person name="Okamoto S."/>
            <person name="Okitani R."/>
            <person name="Kawakami T."/>
            <person name="Noguchi S."/>
            <person name="Itoh T."/>
            <person name="Shigeta K."/>
            <person name="Senba T."/>
            <person name="Matsumura K."/>
            <person name="Nakajima Y."/>
            <person name="Mizuno T."/>
            <person name="Morinaga M."/>
            <person name="Sasaki M."/>
            <person name="Togashi T."/>
            <person name="Oyama M."/>
            <person name="Hata H."/>
            <person name="Watanabe M."/>
            <person name="Komatsu T."/>
            <person name="Mizushima-Sugano J."/>
            <person name="Satoh T."/>
            <person name="Shirai Y."/>
            <person name="Takahashi Y."/>
            <person name="Nakagawa K."/>
            <person name="Okumura K."/>
            <person name="Nagase T."/>
            <person name="Nomura N."/>
            <person name="Kikuchi H."/>
            <person name="Masuho Y."/>
            <person name="Yamashita R."/>
            <person name="Nakai K."/>
            <person name="Yada T."/>
            <person name="Nakamura Y."/>
            <person name="Ohara O."/>
            <person name="Isogai T."/>
            <person name="Sugano S."/>
        </authorList>
    </citation>
    <scope>NUCLEOTIDE SEQUENCE [LARGE SCALE MRNA] (ISOFORMS 1 AND 2)</scope>
    <source>
        <tissue>Ovary</tissue>
        <tissue>Placenta</tissue>
    </source>
</reference>
<reference key="3">
    <citation type="journal article" date="2007" name="BMC Genomics">
        <title>The full-ORF clone resource of the German cDNA consortium.</title>
        <authorList>
            <person name="Bechtel S."/>
            <person name="Rosenfelder H."/>
            <person name="Duda A."/>
            <person name="Schmidt C.P."/>
            <person name="Ernst U."/>
            <person name="Wellenreuther R."/>
            <person name="Mehrle A."/>
            <person name="Schuster C."/>
            <person name="Bahr A."/>
            <person name="Bloecker H."/>
            <person name="Heubner D."/>
            <person name="Hoerlein A."/>
            <person name="Michel G."/>
            <person name="Wedler H."/>
            <person name="Koehrer K."/>
            <person name="Ottenwaelder B."/>
            <person name="Poustka A."/>
            <person name="Wiemann S."/>
            <person name="Schupp I."/>
        </authorList>
    </citation>
    <scope>NUCLEOTIDE SEQUENCE [LARGE SCALE MRNA] (ISOFORM 2)</scope>
    <source>
        <tissue>Testis</tissue>
    </source>
</reference>
<reference key="4">
    <citation type="submission" date="2006-12" db="EMBL/GenBank/DDBJ databases">
        <authorList>
            <person name="Mural R.J."/>
            <person name="Istrail S."/>
            <person name="Sutton G.G."/>
            <person name="Florea L."/>
            <person name="Halpern A.L."/>
            <person name="Mobarry C.M."/>
            <person name="Lippert R."/>
            <person name="Walenz B."/>
            <person name="Shatkay H."/>
            <person name="Dew I."/>
            <person name="Miller J.R."/>
            <person name="Flanigan M.J."/>
            <person name="Edwards N.J."/>
            <person name="Bolanos R."/>
            <person name="Fasulo D."/>
            <person name="Halldorsson B.V."/>
            <person name="Hannenhalli S."/>
            <person name="Turner R."/>
            <person name="Yooseph S."/>
            <person name="Lu F."/>
            <person name="Nusskern D.R."/>
            <person name="Shue B.C."/>
            <person name="Zheng X.H."/>
            <person name="Zhong F."/>
            <person name="Delcher A.L."/>
            <person name="Huson D.H."/>
            <person name="Kravitz S.A."/>
            <person name="Mouchard L."/>
            <person name="Reinert K."/>
            <person name="Remington K.A."/>
            <person name="Clark A.G."/>
            <person name="Waterman M.S."/>
            <person name="Eichler E.E."/>
            <person name="Adams M.D."/>
            <person name="Hunkapiller M.W."/>
            <person name="Myers E.W."/>
            <person name="Venter J.C."/>
        </authorList>
    </citation>
    <scope>NUCLEOTIDE SEQUENCE [LARGE SCALE GENOMIC DNA]</scope>
</reference>
<reference key="5">
    <citation type="submission" date="2005-09" db="EMBL/GenBank/DDBJ databases">
        <authorList>
            <person name="Mural R.J."/>
            <person name="Istrail S."/>
            <person name="Sutton G.G."/>
            <person name="Florea L."/>
            <person name="Halpern A.L."/>
            <person name="Mobarry C.M."/>
            <person name="Lippert R."/>
            <person name="Walenz B."/>
            <person name="Shatkay H."/>
            <person name="Dew I."/>
            <person name="Miller J.R."/>
            <person name="Flanigan M.J."/>
            <person name="Edwards N.J."/>
            <person name="Bolanos R."/>
            <person name="Fasulo D."/>
            <person name="Halldorsson B.V."/>
            <person name="Hannenhalli S."/>
            <person name="Turner R."/>
            <person name="Yooseph S."/>
            <person name="Lu F."/>
            <person name="Nusskern D.R."/>
            <person name="Shue B.C."/>
            <person name="Zheng X.H."/>
            <person name="Zhong F."/>
            <person name="Delcher A.L."/>
            <person name="Huson D.H."/>
            <person name="Kravitz S.A."/>
            <person name="Mouchard L."/>
            <person name="Reinert K."/>
            <person name="Remington K.A."/>
            <person name="Clark A.G."/>
            <person name="Waterman M.S."/>
            <person name="Eichler E.E."/>
            <person name="Adams M.D."/>
            <person name="Hunkapiller M.W."/>
            <person name="Myers E.W."/>
            <person name="Venter J.C."/>
        </authorList>
    </citation>
    <scope>NUCLEOTIDE SEQUENCE [LARGE SCALE GENOMIC DNA]</scope>
</reference>
<reference key="6">
    <citation type="journal article" date="2004" name="Genome Res.">
        <title>The status, quality, and expansion of the NIH full-length cDNA project: the Mammalian Gene Collection (MGC).</title>
        <authorList>
            <consortium name="The MGC Project Team"/>
        </authorList>
    </citation>
    <scope>NUCLEOTIDE SEQUENCE [LARGE SCALE MRNA] (ISOFORMS 1 AND 2)</scope>
    <source>
        <tissue>Pancreas</tissue>
    </source>
</reference>
<dbReference type="EMBL" id="AF353991">
    <property type="protein sequence ID" value="AAK35065.1"/>
    <property type="molecule type" value="mRNA"/>
</dbReference>
<dbReference type="EMBL" id="AK075027">
    <property type="protein sequence ID" value="BAC11359.1"/>
    <property type="molecule type" value="mRNA"/>
</dbReference>
<dbReference type="EMBL" id="AK075155">
    <property type="protein sequence ID" value="BAC11437.1"/>
    <property type="molecule type" value="mRNA"/>
</dbReference>
<dbReference type="EMBL" id="AK314703">
    <property type="protein sequence ID" value="BAG37251.1"/>
    <property type="molecule type" value="mRNA"/>
</dbReference>
<dbReference type="EMBL" id="AL834224">
    <property type="protein sequence ID" value="CAH10695.1"/>
    <property type="molecule type" value="mRNA"/>
</dbReference>
<dbReference type="EMBL" id="CH471080">
    <property type="protein sequence ID" value="EAW63286.1"/>
    <property type="molecule type" value="Genomic_DNA"/>
</dbReference>
<dbReference type="EMBL" id="CH471080">
    <property type="protein sequence ID" value="EAW63288.1"/>
    <property type="molecule type" value="Genomic_DNA"/>
</dbReference>
<dbReference type="EMBL" id="CH471080">
    <property type="protein sequence ID" value="EAW63287.1"/>
    <property type="molecule type" value="Genomic_DNA"/>
</dbReference>
<dbReference type="EMBL" id="BC004878">
    <property type="protein sequence ID" value="AAH04878.2"/>
    <property type="molecule type" value="mRNA"/>
</dbReference>
<dbReference type="EMBL" id="BC109049">
    <property type="protein sequence ID" value="AAI09050.1"/>
    <property type="molecule type" value="mRNA"/>
</dbReference>
<dbReference type="EMBL" id="BC109050">
    <property type="protein sequence ID" value="AAI09051.1"/>
    <property type="molecule type" value="mRNA"/>
</dbReference>
<dbReference type="CCDS" id="CCDS43733.1">
    <molecule id="Q9BX73-2"/>
</dbReference>
<dbReference type="CCDS" id="CCDS6111.1">
    <molecule id="Q9BX73-1"/>
</dbReference>
<dbReference type="RefSeq" id="NP_001019551.1">
    <molecule id="Q9BX73-2"/>
    <property type="nucleotide sequence ID" value="NM_001024380.2"/>
</dbReference>
<dbReference type="RefSeq" id="NP_001019552.1">
    <molecule id="Q9BX73-2"/>
    <property type="nucleotide sequence ID" value="NM_001024381.2"/>
</dbReference>
<dbReference type="RefSeq" id="NP_114146.3">
    <molecule id="Q9BX73-2"/>
    <property type="nucleotide sequence ID" value="NM_031940.3"/>
</dbReference>
<dbReference type="RefSeq" id="NP_510882.1">
    <molecule id="Q9BX73-1"/>
    <property type="nucleotide sequence ID" value="NM_078473.3"/>
</dbReference>
<dbReference type="RefSeq" id="XP_005273714.1">
    <property type="nucleotide sequence ID" value="XM_005273657.3"/>
</dbReference>
<dbReference type="RefSeq" id="XP_006716471.1">
    <molecule id="Q9BX73-2"/>
    <property type="nucleotide sequence ID" value="XM_006716408.5"/>
</dbReference>
<dbReference type="RefSeq" id="XP_011542969.1">
    <molecule id="Q9BX73-2"/>
    <property type="nucleotide sequence ID" value="XM_011544667.3"/>
</dbReference>
<dbReference type="RefSeq" id="XP_054217314.1">
    <molecule id="Q9BX73-2"/>
    <property type="nucleotide sequence ID" value="XM_054361339.1"/>
</dbReference>
<dbReference type="RefSeq" id="XP_054217315.1">
    <molecule id="Q9BX73-2"/>
    <property type="nucleotide sequence ID" value="XM_054361340.1"/>
</dbReference>
<dbReference type="SMR" id="Q9BX73"/>
<dbReference type="BioGRID" id="123790">
    <property type="interactions" value="31"/>
</dbReference>
<dbReference type="FunCoup" id="Q9BX73">
    <property type="interactions" value="1325"/>
</dbReference>
<dbReference type="IntAct" id="Q9BX73">
    <property type="interactions" value="17"/>
</dbReference>
<dbReference type="MINT" id="Q9BX73"/>
<dbReference type="STRING" id="9606.ENSP00000416050"/>
<dbReference type="GlyCosmos" id="Q9BX73">
    <property type="glycosylation" value="1 site, No reported glycans"/>
</dbReference>
<dbReference type="GlyGen" id="Q9BX73">
    <property type="glycosylation" value="4 sites, 1 O-linked glycan (2 sites)"/>
</dbReference>
<dbReference type="iPTMnet" id="Q9BX73"/>
<dbReference type="BioMuta" id="TM2D2"/>
<dbReference type="DMDM" id="74733464"/>
<dbReference type="jPOST" id="Q9BX73"/>
<dbReference type="MassIVE" id="Q9BX73"/>
<dbReference type="PaxDb" id="9606-ENSP00000416050"/>
<dbReference type="PeptideAtlas" id="Q9BX73"/>
<dbReference type="ProteomicsDB" id="79372">
    <molecule id="Q9BX73-1"/>
</dbReference>
<dbReference type="ProteomicsDB" id="79373">
    <molecule id="Q9BX73-2"/>
</dbReference>
<dbReference type="Antibodypedia" id="56606">
    <property type="antibodies" value="28 antibodies from 9 providers"/>
</dbReference>
<dbReference type="DNASU" id="83877"/>
<dbReference type="Ensembl" id="ENST00000397070.6">
    <molecule id="Q9BX73-2"/>
    <property type="protein sequence ID" value="ENSP00000380260.2"/>
    <property type="gene ID" value="ENSG00000169490.17"/>
</dbReference>
<dbReference type="Ensembl" id="ENST00000456397.7">
    <molecule id="Q9BX73-1"/>
    <property type="protein sequence ID" value="ENSP00000416050.2"/>
    <property type="gene ID" value="ENSG00000169490.17"/>
</dbReference>
<dbReference type="Ensembl" id="ENST00000456845.6">
    <molecule id="Q9BX73-2"/>
    <property type="protein sequence ID" value="ENSP00000391674.2"/>
    <property type="gene ID" value="ENSG00000169490.17"/>
</dbReference>
<dbReference type="GeneID" id="83877"/>
<dbReference type="KEGG" id="hsa:83877"/>
<dbReference type="MANE-Select" id="ENST00000456397.7">
    <property type="protein sequence ID" value="ENSP00000416050.2"/>
    <property type="RefSeq nucleotide sequence ID" value="NM_078473.3"/>
    <property type="RefSeq protein sequence ID" value="NP_510882.1"/>
</dbReference>
<dbReference type="UCSC" id="uc003xmk.4">
    <molecule id="Q9BX73-1"/>
    <property type="organism name" value="human"/>
</dbReference>
<dbReference type="AGR" id="HGNC:24127"/>
<dbReference type="CTD" id="83877"/>
<dbReference type="GeneCards" id="TM2D2"/>
<dbReference type="HGNC" id="HGNC:24127">
    <property type="gene designation" value="TM2D2"/>
</dbReference>
<dbReference type="HPA" id="ENSG00000169490">
    <property type="expression patterns" value="Low tissue specificity"/>
</dbReference>
<dbReference type="MIM" id="610081">
    <property type="type" value="gene"/>
</dbReference>
<dbReference type="neXtProt" id="NX_Q9BX73"/>
<dbReference type="OpenTargets" id="ENSG00000169490"/>
<dbReference type="PharmGKB" id="PA142670799"/>
<dbReference type="VEuPathDB" id="HostDB:ENSG00000169490"/>
<dbReference type="eggNOG" id="KOG4272">
    <property type="taxonomic scope" value="Eukaryota"/>
</dbReference>
<dbReference type="GeneTree" id="ENSGT00730000111181"/>
<dbReference type="HOGENOM" id="CLU_084872_3_2_1"/>
<dbReference type="InParanoid" id="Q9BX73"/>
<dbReference type="OMA" id="PIDHKGN"/>
<dbReference type="OrthoDB" id="408511at2759"/>
<dbReference type="PAN-GO" id="Q9BX73">
    <property type="GO annotations" value="0 GO annotations based on evolutionary models"/>
</dbReference>
<dbReference type="PhylomeDB" id="Q9BX73"/>
<dbReference type="TreeFam" id="TF314896"/>
<dbReference type="PathwayCommons" id="Q9BX73"/>
<dbReference type="SignaLink" id="Q9BX73"/>
<dbReference type="BioGRID-ORCS" id="83877">
    <property type="hits" value="130 hits in 1155 CRISPR screens"/>
</dbReference>
<dbReference type="ChiTaRS" id="TM2D2">
    <property type="organism name" value="human"/>
</dbReference>
<dbReference type="GenomeRNAi" id="83877"/>
<dbReference type="Pharos" id="Q9BX73">
    <property type="development level" value="Tdark"/>
</dbReference>
<dbReference type="PRO" id="PR:Q9BX73"/>
<dbReference type="Proteomes" id="UP000005640">
    <property type="component" value="Chromosome 8"/>
</dbReference>
<dbReference type="RNAct" id="Q9BX73">
    <property type="molecule type" value="protein"/>
</dbReference>
<dbReference type="Bgee" id="ENSG00000169490">
    <property type="expression patterns" value="Expressed in kidney epithelium and 184 other cell types or tissues"/>
</dbReference>
<dbReference type="ExpressionAtlas" id="Q9BX73">
    <property type="expression patterns" value="baseline and differential"/>
</dbReference>
<dbReference type="GO" id="GO:0016020">
    <property type="term" value="C:membrane"/>
    <property type="evidence" value="ECO:0007669"/>
    <property type="project" value="UniProtKB-SubCell"/>
</dbReference>
<dbReference type="InterPro" id="IPR007829">
    <property type="entry name" value="TM2"/>
</dbReference>
<dbReference type="InterPro" id="IPR050932">
    <property type="entry name" value="TM2D1-3-like"/>
</dbReference>
<dbReference type="PANTHER" id="PTHR21016">
    <property type="entry name" value="BETA-AMYLOID BINDING PROTEIN-RELATED"/>
    <property type="match status" value="1"/>
</dbReference>
<dbReference type="PANTHER" id="PTHR21016:SF4">
    <property type="entry name" value="TM2 DOMAIN-CONTAINING PROTEIN 2"/>
    <property type="match status" value="1"/>
</dbReference>
<dbReference type="Pfam" id="PF05154">
    <property type="entry name" value="TM2"/>
    <property type="match status" value="1"/>
</dbReference>
<keyword id="KW-0025">Alternative splicing</keyword>
<keyword id="KW-0325">Glycoprotein</keyword>
<keyword id="KW-0472">Membrane</keyword>
<keyword id="KW-1267">Proteomics identification</keyword>
<keyword id="KW-1185">Reference proteome</keyword>
<keyword id="KW-0732">Signal</keyword>
<keyword id="KW-0812">Transmembrane</keyword>
<keyword id="KW-1133">Transmembrane helix</keyword>
<comment type="interaction">
    <interactant intactId="EBI-7054664">
        <id>Q9BX73</id>
    </interactant>
    <interactant intactId="EBI-3905204">
        <id>P29033</id>
        <label>GJB2</label>
    </interactant>
    <organismsDiffer>false</organismsDiffer>
    <experiments>3</experiments>
</comment>
<comment type="subcellular location">
    <subcellularLocation>
        <location evidence="8">Membrane</location>
        <topology evidence="8">Multi-pass membrane protein</topology>
    </subcellularLocation>
</comment>
<comment type="alternative products">
    <event type="alternative splicing"/>
    <isoform>
        <id>Q9BX73-1</id>
        <name>1</name>
        <sequence type="displayed"/>
    </isoform>
    <isoform>
        <id>Q9BX73-2</id>
        <name>2</name>
        <sequence type="described" ref="VSP_027495"/>
    </isoform>
</comment>
<comment type="tissue specificity">
    <text evidence="4">Widely expressed.</text>
</comment>
<comment type="similarity">
    <text evidence="8">Belongs to the TM2 family.</text>
</comment>
<protein>
    <recommendedName>
        <fullName>TM2 domain-containing protein 2</fullName>
    </recommendedName>
    <alternativeName>
        <fullName>Beta-amyloid-binding protein-like protein 1</fullName>
        <shortName>BBP-like protein 1</shortName>
    </alternativeName>
</protein>
<organism>
    <name type="scientific">Homo sapiens</name>
    <name type="common">Human</name>
    <dbReference type="NCBI Taxonomy" id="9606"/>
    <lineage>
        <taxon>Eukaryota</taxon>
        <taxon>Metazoa</taxon>
        <taxon>Chordata</taxon>
        <taxon>Craniata</taxon>
        <taxon>Vertebrata</taxon>
        <taxon>Euteleostomi</taxon>
        <taxon>Mammalia</taxon>
        <taxon>Eutheria</taxon>
        <taxon>Euarchontoglires</taxon>
        <taxon>Primates</taxon>
        <taxon>Haplorrhini</taxon>
        <taxon>Catarrhini</taxon>
        <taxon>Hominidae</taxon>
        <taxon>Homo</taxon>
    </lineage>
</organism>